<reference key="1">
    <citation type="journal article" date="1990" name="Plant Mol. Biol.">
        <title>Structure of a tobacco endochitinase gene: evidence that different chitinase genes can arise by transposition of sequences encoding a cysteine-rich domain.</title>
        <authorList>
            <person name="Shinshi H."/>
            <person name="Neuhaus J.-M."/>
            <person name="Ryals J."/>
            <person name="Meins F. Jr."/>
        </authorList>
    </citation>
    <scope>NUCLEOTIDE SEQUENCE [GENOMIC DNA / MRNA]</scope>
    <source>
        <strain>cv. Havana 425</strain>
        <tissue>Leaf</tissue>
    </source>
</reference>
<reference key="2">
    <citation type="journal article" date="1990" name="Plant Cell">
        <title>Chitinase, beta-1,3-glucanase, osmotin, and extensin are expressed in tobacco explants during flower formation.</title>
        <authorList>
            <person name="Neale A.D."/>
            <person name="Wahleithner J.A."/>
            <person name="Lund M."/>
            <person name="Bonnett H.T."/>
            <person name="Kelly A."/>
            <person name="Meeks-Wagner D.R."/>
            <person name="Peacock W.J."/>
            <person name="Dennis E.S."/>
        </authorList>
    </citation>
    <scope>NUCLEOTIDE SEQUENCE [MRNA]</scope>
    <scope>DEVELOPMENTAL STAGE</scope>
    <source>
        <strain>cv. Samsun</strain>
        <tissue>Flower bud</tissue>
    </source>
</reference>
<reference key="3">
    <citation type="journal article" date="1991" name="Proc. Natl. Acad. Sci. U.S.A.">
        <title>A short C-terminal sequence is necessary and sufficient for the targeting of chitinases to the plant vacuole.</title>
        <authorList>
            <person name="Neuhaus J.-M."/>
            <person name="Sticher L."/>
            <person name="Meins F. Jr."/>
            <person name="Boller T."/>
        </authorList>
    </citation>
    <scope>SUBCELLULAR LOCATION</scope>
</reference>
<reference key="4">
    <citation type="journal article" date="1992" name="Science">
        <title>Vacuolar chitinases of tobacco: a new class of hydroxyproline-containing proteins.</title>
        <authorList>
            <person name="Sticher L."/>
            <person name="Hofsteenge J."/>
            <person name="Milani A."/>
            <person name="Neuhaus J.-M."/>
            <person name="Meins F. Jr."/>
        </authorList>
    </citation>
    <scope>HYDROXYLATION AT PRO-67; PRO-69; PRO-71; PRO-72; PRO-74 AND PRO-75</scope>
    <scope>IDENTIFICATION BY MASS SPECTROMETRY</scope>
</reference>
<name>CHI1_TOBAC</name>
<proteinExistence type="evidence at protein level"/>
<dbReference type="EC" id="3.2.1.14"/>
<dbReference type="EMBL" id="X16938">
    <property type="protein sequence ID" value="CAA34812.1"/>
    <property type="molecule type" value="Genomic_DNA"/>
</dbReference>
<dbReference type="EMBL" id="X16939">
    <property type="protein sequence ID" value="CAA34813.1"/>
    <property type="molecule type" value="mRNA"/>
</dbReference>
<dbReference type="EMBL" id="S44869">
    <property type="protein sequence ID" value="AAB23374.1"/>
    <property type="molecule type" value="mRNA"/>
</dbReference>
<dbReference type="PIR" id="S08627">
    <property type="entry name" value="S08627"/>
</dbReference>
<dbReference type="RefSeq" id="NP_001311556.1">
    <property type="nucleotide sequence ID" value="NM_001324627.1"/>
</dbReference>
<dbReference type="SMR" id="P08252"/>
<dbReference type="STRING" id="4097.P08252"/>
<dbReference type="CAZy" id="CBM18">
    <property type="family name" value="Carbohydrate-Binding Module Family 18"/>
</dbReference>
<dbReference type="CAZy" id="GH19">
    <property type="family name" value="Glycoside Hydrolase Family 19"/>
</dbReference>
<dbReference type="PaxDb" id="4097-P08252"/>
<dbReference type="ProMEX" id="P08252"/>
<dbReference type="GeneID" id="107759005"/>
<dbReference type="KEGG" id="nta:107759005"/>
<dbReference type="OMA" id="GSDYCQP"/>
<dbReference type="OrthoDB" id="5985073at2759"/>
<dbReference type="PhylomeDB" id="P08252"/>
<dbReference type="Proteomes" id="UP000084051">
    <property type="component" value="Unplaced"/>
</dbReference>
<dbReference type="GO" id="GO:0005773">
    <property type="term" value="C:vacuole"/>
    <property type="evidence" value="ECO:0007669"/>
    <property type="project" value="UniProtKB-SubCell"/>
</dbReference>
<dbReference type="GO" id="GO:0008061">
    <property type="term" value="F:chitin binding"/>
    <property type="evidence" value="ECO:0007669"/>
    <property type="project" value="UniProtKB-KW"/>
</dbReference>
<dbReference type="GO" id="GO:0004568">
    <property type="term" value="F:chitinase activity"/>
    <property type="evidence" value="ECO:0000318"/>
    <property type="project" value="GO_Central"/>
</dbReference>
<dbReference type="GO" id="GO:0008843">
    <property type="term" value="F:endochitinase activity"/>
    <property type="evidence" value="ECO:0007669"/>
    <property type="project" value="UniProtKB-EC"/>
</dbReference>
<dbReference type="GO" id="GO:0016998">
    <property type="term" value="P:cell wall macromolecule catabolic process"/>
    <property type="evidence" value="ECO:0007669"/>
    <property type="project" value="InterPro"/>
</dbReference>
<dbReference type="GO" id="GO:0006032">
    <property type="term" value="P:chitin catabolic process"/>
    <property type="evidence" value="ECO:0007669"/>
    <property type="project" value="UniProtKB-KW"/>
</dbReference>
<dbReference type="GO" id="GO:0006952">
    <property type="term" value="P:defense response"/>
    <property type="evidence" value="ECO:0007669"/>
    <property type="project" value="UniProtKB-KW"/>
</dbReference>
<dbReference type="GO" id="GO:0000272">
    <property type="term" value="P:polysaccharide catabolic process"/>
    <property type="evidence" value="ECO:0007669"/>
    <property type="project" value="UniProtKB-KW"/>
</dbReference>
<dbReference type="CDD" id="cd00325">
    <property type="entry name" value="chitinase_GH19"/>
    <property type="match status" value="1"/>
</dbReference>
<dbReference type="CDD" id="cd06921">
    <property type="entry name" value="ChtBD1_GH19_hevein"/>
    <property type="match status" value="1"/>
</dbReference>
<dbReference type="FunFam" id="3.30.60.10:FF:000001">
    <property type="entry name" value="Basic endochitinase"/>
    <property type="match status" value="1"/>
</dbReference>
<dbReference type="FunFam" id="3.30.20.10:FF:000001">
    <property type="entry name" value="Endochitinase (Chitinase)"/>
    <property type="match status" value="1"/>
</dbReference>
<dbReference type="Gene3D" id="1.10.530.10">
    <property type="match status" value="1"/>
</dbReference>
<dbReference type="Gene3D" id="3.30.20.10">
    <property type="entry name" value="Endochitinase, domain 2"/>
    <property type="match status" value="1"/>
</dbReference>
<dbReference type="Gene3D" id="3.30.60.10">
    <property type="entry name" value="Endochitinase-like"/>
    <property type="match status" value="1"/>
</dbReference>
<dbReference type="InterPro" id="IPR001002">
    <property type="entry name" value="Chitin-bd_1"/>
</dbReference>
<dbReference type="InterPro" id="IPR018371">
    <property type="entry name" value="Chitin-binding_1_CS"/>
</dbReference>
<dbReference type="InterPro" id="IPR036861">
    <property type="entry name" value="Endochitinase-like_sf"/>
</dbReference>
<dbReference type="InterPro" id="IPR016283">
    <property type="entry name" value="Glyco_hydro_19"/>
</dbReference>
<dbReference type="InterPro" id="IPR000726">
    <property type="entry name" value="Glyco_hydro_19_cat"/>
</dbReference>
<dbReference type="InterPro" id="IPR023346">
    <property type="entry name" value="Lysozyme-like_dom_sf"/>
</dbReference>
<dbReference type="PANTHER" id="PTHR22595">
    <property type="entry name" value="CHITINASE-RELATED"/>
    <property type="match status" value="1"/>
</dbReference>
<dbReference type="PANTHER" id="PTHR22595:SF184">
    <property type="entry name" value="ENDOCHITINASE A"/>
    <property type="match status" value="1"/>
</dbReference>
<dbReference type="Pfam" id="PF00187">
    <property type="entry name" value="Chitin_bind_1"/>
    <property type="match status" value="1"/>
</dbReference>
<dbReference type="Pfam" id="PF00182">
    <property type="entry name" value="Glyco_hydro_19"/>
    <property type="match status" value="1"/>
</dbReference>
<dbReference type="PIRSF" id="PIRSF001060">
    <property type="entry name" value="Endochitinase"/>
    <property type="match status" value="1"/>
</dbReference>
<dbReference type="PRINTS" id="PR00451">
    <property type="entry name" value="CHITINBINDNG"/>
</dbReference>
<dbReference type="SMART" id="SM00270">
    <property type="entry name" value="ChtBD1"/>
    <property type="match status" value="1"/>
</dbReference>
<dbReference type="SUPFAM" id="SSF53955">
    <property type="entry name" value="Lysozyme-like"/>
    <property type="match status" value="1"/>
</dbReference>
<dbReference type="SUPFAM" id="SSF57016">
    <property type="entry name" value="Plant lectins/antimicrobial peptides"/>
    <property type="match status" value="1"/>
</dbReference>
<dbReference type="PROSITE" id="PS00026">
    <property type="entry name" value="CHIT_BIND_I_1"/>
    <property type="match status" value="1"/>
</dbReference>
<dbReference type="PROSITE" id="PS50941">
    <property type="entry name" value="CHIT_BIND_I_2"/>
    <property type="match status" value="1"/>
</dbReference>
<dbReference type="PROSITE" id="PS00773">
    <property type="entry name" value="CHITINASE_19_1"/>
    <property type="match status" value="1"/>
</dbReference>
<dbReference type="PROSITE" id="PS00774">
    <property type="entry name" value="CHITINASE_19_2"/>
    <property type="match status" value="1"/>
</dbReference>
<protein>
    <recommendedName>
        <fullName>Endochitinase A</fullName>
        <shortName>CHN-A</shortName>
        <ecNumber>3.2.1.14</ecNumber>
    </recommendedName>
</protein>
<comment type="function">
    <text>Defense against chitin-containing fungal pathogens.</text>
</comment>
<comment type="catalytic activity">
    <reaction>
        <text>Random endo-hydrolysis of N-acetyl-beta-D-glucosaminide (1-&gt;4)-beta-linkages in chitin and chitodextrins.</text>
        <dbReference type="EC" id="3.2.1.14"/>
    </reaction>
</comment>
<comment type="subcellular location">
    <subcellularLocation>
        <location evidence="4">Vacuole</location>
    </subcellularLocation>
    <text>Vacuolar and protoplast.</text>
</comment>
<comment type="developmental stage">
    <text evidence="5">Expressed during flower formation.</text>
</comment>
<comment type="induction">
    <text>By ethylene.</text>
</comment>
<comment type="PTM">
    <text>The 4-hydroxyproline residues are not glycosylated in this plant vacuolar protein.</text>
</comment>
<comment type="similarity">
    <text evidence="6">Belongs to the glycosyl hydrolase 19 family. Chitinase class I subfamily.</text>
</comment>
<sequence>MRLCKFTALSSLLFSLLLLSASAEQCGSQAGGARCPSGLCCSKFGWCGNTNDYCGPGNCQSQCPGGPTPTPPTPPGGGDLGSIISSSMFDQMLKHRNDNACQGKGFYSYNAFINAARSFPGFGTSGDTTARKREIAAFFAQTSHETTGGWATAPDGPYAWGYCWLREQGSPGDYCTPSGQWPCAPGRKYFGRGPIQISHNYNYGPCGRAIGVDLLNNPDLVATDPVISFKSALWFWMTPQSPKPSCHDVIIGRWQPSAGDRAANRLPGFGVITNIINGGLECGRGTDSRVQDRIGFYRRYCSILGVSPGDNLDCGNQRSFGNGLLVDTM</sequence>
<feature type="signal peptide">
    <location>
        <begin position="1"/>
        <end position="23"/>
    </location>
</feature>
<feature type="chain" id="PRO_0000005330" description="Endochitinase A">
    <location>
        <begin position="24"/>
        <end position="322"/>
    </location>
</feature>
<feature type="propeptide" id="PRO_0000005331" description="Removed in mature form">
    <location>
        <begin position="323"/>
        <end position="329"/>
    </location>
</feature>
<feature type="domain" description="Chitin-binding type-1" evidence="2">
    <location>
        <begin position="24"/>
        <end position="65"/>
    </location>
</feature>
<feature type="active site" description="Proton donor" evidence="1">
    <location>
        <position position="145"/>
    </location>
</feature>
<feature type="modified residue" description="4-hydroxyproline; partial" evidence="3">
    <location>
        <position position="67"/>
    </location>
</feature>
<feature type="modified residue" description="4-hydroxyproline" evidence="3">
    <location>
        <position position="69"/>
    </location>
</feature>
<feature type="modified residue" description="4-hydroxyproline" evidence="3">
    <location>
        <position position="71"/>
    </location>
</feature>
<feature type="modified residue" description="4-hydroxyproline" evidence="3">
    <location>
        <position position="72"/>
    </location>
</feature>
<feature type="modified residue" description="4-hydroxyproline" evidence="3">
    <location>
        <position position="74"/>
    </location>
</feature>
<feature type="modified residue" description="4-hydroxyproline; partial" evidence="3">
    <location>
        <position position="75"/>
    </location>
</feature>
<feature type="disulfide bond" evidence="2">
    <location>
        <begin position="26"/>
        <end position="41"/>
    </location>
</feature>
<feature type="disulfide bond" evidence="2">
    <location>
        <begin position="35"/>
        <end position="47"/>
    </location>
</feature>
<feature type="disulfide bond" evidence="2">
    <location>
        <begin position="40"/>
        <end position="54"/>
    </location>
</feature>
<feature type="disulfide bond" evidence="2">
    <location>
        <begin position="59"/>
        <end position="63"/>
    </location>
</feature>
<feature type="disulfide bond" evidence="2">
    <location>
        <begin position="101"/>
        <end position="163"/>
    </location>
</feature>
<feature type="disulfide bond" evidence="2">
    <location>
        <begin position="175"/>
        <end position="183"/>
    </location>
</feature>
<feature type="disulfide bond" evidence="2">
    <location>
        <begin position="282"/>
        <end position="314"/>
    </location>
</feature>
<feature type="sequence conflict" description="In Ref. 2; AAB23374." evidence="6" ref="2">
    <original>TPPGGG</original>
    <variation>HPTRC</variation>
    <location>
        <begin position="73"/>
        <end position="78"/>
    </location>
</feature>
<feature type="sequence conflict" description="In Ref. 2; AAB23374." evidence="6" ref="2">
    <original>A</original>
    <variation>S</variation>
    <location>
        <position position="263"/>
    </location>
</feature>
<evidence type="ECO:0000250" key="1">
    <source>
        <dbReference type="UniProtKB" id="P29022"/>
    </source>
</evidence>
<evidence type="ECO:0000255" key="2">
    <source>
        <dbReference type="PROSITE-ProRule" id="PRU00261"/>
    </source>
</evidence>
<evidence type="ECO:0000269" key="3">
    <source>
    </source>
</evidence>
<evidence type="ECO:0000269" key="4">
    <source>
    </source>
</evidence>
<evidence type="ECO:0000269" key="5">
    <source>
    </source>
</evidence>
<evidence type="ECO:0000305" key="6"/>
<gene>
    <name type="primary">CHN48</name>
</gene>
<accession>P08252</accession>
<accession>Q41180</accession>
<keyword id="KW-0119">Carbohydrate metabolism</keyword>
<keyword id="KW-0146">Chitin degradation</keyword>
<keyword id="KW-0147">Chitin-binding</keyword>
<keyword id="KW-1015">Disulfide bond</keyword>
<keyword id="KW-0326">Glycosidase</keyword>
<keyword id="KW-0378">Hydrolase</keyword>
<keyword id="KW-0379">Hydroxylation</keyword>
<keyword id="KW-0611">Plant defense</keyword>
<keyword id="KW-0624">Polysaccharide degradation</keyword>
<keyword id="KW-1185">Reference proteome</keyword>
<keyword id="KW-0732">Signal</keyword>
<keyword id="KW-0926">Vacuole</keyword>
<organism>
    <name type="scientific">Nicotiana tabacum</name>
    <name type="common">Common tobacco</name>
    <dbReference type="NCBI Taxonomy" id="4097"/>
    <lineage>
        <taxon>Eukaryota</taxon>
        <taxon>Viridiplantae</taxon>
        <taxon>Streptophyta</taxon>
        <taxon>Embryophyta</taxon>
        <taxon>Tracheophyta</taxon>
        <taxon>Spermatophyta</taxon>
        <taxon>Magnoliopsida</taxon>
        <taxon>eudicotyledons</taxon>
        <taxon>Gunneridae</taxon>
        <taxon>Pentapetalae</taxon>
        <taxon>asterids</taxon>
        <taxon>lamiids</taxon>
        <taxon>Solanales</taxon>
        <taxon>Solanaceae</taxon>
        <taxon>Nicotianoideae</taxon>
        <taxon>Nicotianeae</taxon>
        <taxon>Nicotiana</taxon>
    </lineage>
</organism>